<organism>
    <name type="scientific">Synechococcus sp. (strain JA-2-3B'a(2-13))</name>
    <name type="common">Cyanobacteria bacterium Yellowstone B-Prime</name>
    <dbReference type="NCBI Taxonomy" id="321332"/>
    <lineage>
        <taxon>Bacteria</taxon>
        <taxon>Bacillati</taxon>
        <taxon>Cyanobacteriota</taxon>
        <taxon>Cyanophyceae</taxon>
        <taxon>Synechococcales</taxon>
        <taxon>Synechococcaceae</taxon>
        <taxon>Synechococcus</taxon>
    </lineage>
</organism>
<feature type="chain" id="PRO_0000241287" description="Aspartyl/glutamyl-tRNA(Asn/Gln) amidotransferase subunit B">
    <location>
        <begin position="1"/>
        <end position="490"/>
    </location>
</feature>
<protein>
    <recommendedName>
        <fullName evidence="1">Aspartyl/glutamyl-tRNA(Asn/Gln) amidotransferase subunit B</fullName>
        <shortName evidence="1">Asp/Glu-ADT subunit B</shortName>
        <ecNumber evidence="1">6.3.5.-</ecNumber>
    </recommendedName>
</protein>
<evidence type="ECO:0000255" key="1">
    <source>
        <dbReference type="HAMAP-Rule" id="MF_00121"/>
    </source>
</evidence>
<reference key="1">
    <citation type="journal article" date="2007" name="ISME J.">
        <title>Population level functional diversity in a microbial community revealed by comparative genomic and metagenomic analyses.</title>
        <authorList>
            <person name="Bhaya D."/>
            <person name="Grossman A.R."/>
            <person name="Steunou A.-S."/>
            <person name="Khuri N."/>
            <person name="Cohan F.M."/>
            <person name="Hamamura N."/>
            <person name="Melendrez M.C."/>
            <person name="Bateson M.M."/>
            <person name="Ward D.M."/>
            <person name="Heidelberg J.F."/>
        </authorList>
    </citation>
    <scope>NUCLEOTIDE SEQUENCE [LARGE SCALE GENOMIC DNA]</scope>
    <source>
        <strain>JA-2-3B'a(2-13)</strain>
    </source>
</reference>
<gene>
    <name evidence="1" type="primary">gatB</name>
    <name type="ordered locus">CYB_0708</name>
</gene>
<proteinExistence type="inferred from homology"/>
<sequence>MTVAAPAKVQYEAVIGLEVHCQLSTRSKIFSSSATAFGAPPNTQIDPICMGLPGTLPVLNEKVLEYAVKAGLALNCTIAPYSKFDRKQYFYPDLPKNYQISQYDLPIATHGWIEIQLSDGRTKRIGITRLHMEEDAGKLVHAGSDRLSGSSYSLVDFNRAGVPLIEIVSEPDIRSGEEAAEYVQELRRILRYAGLCDGNLQEGSLRCDVNISVRPLGSQTFGTKVEIKNMNSFNAIQRAIEYEFNRQVKAVEAGERIVQETRLWEENSQRTISMRKKEGSSDYRYFPEPDLPPIRVTEAQKTRWQAELPELPGVKRRRYQEVYGLSVYDARYLSDERNTAEYFEAVIAAGADPKAAANWMMSDIASYLNTHKLDYPDIALKPETLAELIGLIEQGTISSKIAKEILPELLEKGGSARALVEAKGMTQISDSALLGQMIAEVLAENPEQLQQYRGGKTKLFGYFVGQLMKKTQGRADPKLANDLLKQHLDG</sequence>
<accession>Q2JNH3</accession>
<comment type="function">
    <text evidence="1">Allows the formation of correctly charged Asn-tRNA(Asn) or Gln-tRNA(Gln) through the transamidation of misacylated Asp-tRNA(Asn) or Glu-tRNA(Gln) in organisms which lack either or both of asparaginyl-tRNA or glutaminyl-tRNA synthetases. The reaction takes place in the presence of glutamine and ATP through an activated phospho-Asp-tRNA(Asn) or phospho-Glu-tRNA(Gln).</text>
</comment>
<comment type="catalytic activity">
    <reaction evidence="1">
        <text>L-glutamyl-tRNA(Gln) + L-glutamine + ATP + H2O = L-glutaminyl-tRNA(Gln) + L-glutamate + ADP + phosphate + H(+)</text>
        <dbReference type="Rhea" id="RHEA:17521"/>
        <dbReference type="Rhea" id="RHEA-COMP:9681"/>
        <dbReference type="Rhea" id="RHEA-COMP:9684"/>
        <dbReference type="ChEBI" id="CHEBI:15377"/>
        <dbReference type="ChEBI" id="CHEBI:15378"/>
        <dbReference type="ChEBI" id="CHEBI:29985"/>
        <dbReference type="ChEBI" id="CHEBI:30616"/>
        <dbReference type="ChEBI" id="CHEBI:43474"/>
        <dbReference type="ChEBI" id="CHEBI:58359"/>
        <dbReference type="ChEBI" id="CHEBI:78520"/>
        <dbReference type="ChEBI" id="CHEBI:78521"/>
        <dbReference type="ChEBI" id="CHEBI:456216"/>
    </reaction>
</comment>
<comment type="catalytic activity">
    <reaction evidence="1">
        <text>L-aspartyl-tRNA(Asn) + L-glutamine + ATP + H2O = L-asparaginyl-tRNA(Asn) + L-glutamate + ADP + phosphate + 2 H(+)</text>
        <dbReference type="Rhea" id="RHEA:14513"/>
        <dbReference type="Rhea" id="RHEA-COMP:9674"/>
        <dbReference type="Rhea" id="RHEA-COMP:9677"/>
        <dbReference type="ChEBI" id="CHEBI:15377"/>
        <dbReference type="ChEBI" id="CHEBI:15378"/>
        <dbReference type="ChEBI" id="CHEBI:29985"/>
        <dbReference type="ChEBI" id="CHEBI:30616"/>
        <dbReference type="ChEBI" id="CHEBI:43474"/>
        <dbReference type="ChEBI" id="CHEBI:58359"/>
        <dbReference type="ChEBI" id="CHEBI:78515"/>
        <dbReference type="ChEBI" id="CHEBI:78516"/>
        <dbReference type="ChEBI" id="CHEBI:456216"/>
    </reaction>
</comment>
<comment type="subunit">
    <text evidence="1">Heterotrimer of A, B and C subunits.</text>
</comment>
<comment type="similarity">
    <text evidence="1">Belongs to the GatB/GatE family. GatB subfamily.</text>
</comment>
<dbReference type="EC" id="6.3.5.-" evidence="1"/>
<dbReference type="EMBL" id="CP000240">
    <property type="protein sequence ID" value="ABD01693.1"/>
    <property type="molecule type" value="Genomic_DNA"/>
</dbReference>
<dbReference type="RefSeq" id="WP_011432351.1">
    <property type="nucleotide sequence ID" value="NC_007776.1"/>
</dbReference>
<dbReference type="SMR" id="Q2JNH3"/>
<dbReference type="STRING" id="321332.CYB_0708"/>
<dbReference type="KEGG" id="cyb:CYB_0708"/>
<dbReference type="eggNOG" id="COG0064">
    <property type="taxonomic scope" value="Bacteria"/>
</dbReference>
<dbReference type="HOGENOM" id="CLU_019240_0_0_3"/>
<dbReference type="OrthoDB" id="9804078at2"/>
<dbReference type="Proteomes" id="UP000001938">
    <property type="component" value="Chromosome"/>
</dbReference>
<dbReference type="GO" id="GO:0050566">
    <property type="term" value="F:asparaginyl-tRNA synthase (glutamine-hydrolyzing) activity"/>
    <property type="evidence" value="ECO:0007669"/>
    <property type="project" value="RHEA"/>
</dbReference>
<dbReference type="GO" id="GO:0005524">
    <property type="term" value="F:ATP binding"/>
    <property type="evidence" value="ECO:0007669"/>
    <property type="project" value="UniProtKB-KW"/>
</dbReference>
<dbReference type="GO" id="GO:0050567">
    <property type="term" value="F:glutaminyl-tRNA synthase (glutamine-hydrolyzing) activity"/>
    <property type="evidence" value="ECO:0007669"/>
    <property type="project" value="UniProtKB-UniRule"/>
</dbReference>
<dbReference type="GO" id="GO:0070681">
    <property type="term" value="P:glutaminyl-tRNAGln biosynthesis via transamidation"/>
    <property type="evidence" value="ECO:0007669"/>
    <property type="project" value="TreeGrafter"/>
</dbReference>
<dbReference type="GO" id="GO:0006412">
    <property type="term" value="P:translation"/>
    <property type="evidence" value="ECO:0007669"/>
    <property type="project" value="UniProtKB-UniRule"/>
</dbReference>
<dbReference type="FunFam" id="1.10.10.410:FF:000001">
    <property type="entry name" value="Aspartyl/glutamyl-tRNA(Asn/Gln) amidotransferase subunit B"/>
    <property type="match status" value="1"/>
</dbReference>
<dbReference type="FunFam" id="1.10.150.380:FF:000001">
    <property type="entry name" value="Aspartyl/glutamyl-tRNA(Asn/Gln) amidotransferase subunit B"/>
    <property type="match status" value="1"/>
</dbReference>
<dbReference type="Gene3D" id="1.10.10.410">
    <property type="match status" value="1"/>
</dbReference>
<dbReference type="Gene3D" id="1.10.150.380">
    <property type="entry name" value="GatB domain, N-terminal subdomain"/>
    <property type="match status" value="1"/>
</dbReference>
<dbReference type="HAMAP" id="MF_00121">
    <property type="entry name" value="GatB"/>
    <property type="match status" value="1"/>
</dbReference>
<dbReference type="InterPro" id="IPR017959">
    <property type="entry name" value="Asn/Gln-tRNA_amidoTrfase_suB/E"/>
</dbReference>
<dbReference type="InterPro" id="IPR006075">
    <property type="entry name" value="Asn/Gln-tRNA_Trfase_suB/E_cat"/>
</dbReference>
<dbReference type="InterPro" id="IPR018027">
    <property type="entry name" value="Asn/Gln_amidotransferase"/>
</dbReference>
<dbReference type="InterPro" id="IPR003789">
    <property type="entry name" value="Asn/Gln_tRNA_amidoTrase-B-like"/>
</dbReference>
<dbReference type="InterPro" id="IPR004413">
    <property type="entry name" value="GatB"/>
</dbReference>
<dbReference type="InterPro" id="IPR042114">
    <property type="entry name" value="GatB_C_1"/>
</dbReference>
<dbReference type="InterPro" id="IPR023168">
    <property type="entry name" value="GatB_Yqey_C_2"/>
</dbReference>
<dbReference type="InterPro" id="IPR017958">
    <property type="entry name" value="Gln-tRNA_amidoTrfase_suB_CS"/>
</dbReference>
<dbReference type="InterPro" id="IPR014746">
    <property type="entry name" value="Gln_synth/guanido_kin_cat_dom"/>
</dbReference>
<dbReference type="NCBIfam" id="TIGR00133">
    <property type="entry name" value="gatB"/>
    <property type="match status" value="1"/>
</dbReference>
<dbReference type="NCBIfam" id="NF004012">
    <property type="entry name" value="PRK05477.1-2"/>
    <property type="match status" value="1"/>
</dbReference>
<dbReference type="NCBIfam" id="NF004014">
    <property type="entry name" value="PRK05477.1-4"/>
    <property type="match status" value="1"/>
</dbReference>
<dbReference type="PANTHER" id="PTHR11659">
    <property type="entry name" value="GLUTAMYL-TRNA GLN AMIDOTRANSFERASE SUBUNIT B MITOCHONDRIAL AND PROKARYOTIC PET112-RELATED"/>
    <property type="match status" value="1"/>
</dbReference>
<dbReference type="PANTHER" id="PTHR11659:SF0">
    <property type="entry name" value="GLUTAMYL-TRNA(GLN) AMIDOTRANSFERASE SUBUNIT B, MITOCHONDRIAL"/>
    <property type="match status" value="1"/>
</dbReference>
<dbReference type="Pfam" id="PF02934">
    <property type="entry name" value="GatB_N"/>
    <property type="match status" value="1"/>
</dbReference>
<dbReference type="Pfam" id="PF02637">
    <property type="entry name" value="GatB_Yqey"/>
    <property type="match status" value="1"/>
</dbReference>
<dbReference type="SMART" id="SM00845">
    <property type="entry name" value="GatB_Yqey"/>
    <property type="match status" value="1"/>
</dbReference>
<dbReference type="SUPFAM" id="SSF89095">
    <property type="entry name" value="GatB/YqeY motif"/>
    <property type="match status" value="1"/>
</dbReference>
<dbReference type="SUPFAM" id="SSF55931">
    <property type="entry name" value="Glutamine synthetase/guanido kinase"/>
    <property type="match status" value="1"/>
</dbReference>
<dbReference type="PROSITE" id="PS01234">
    <property type="entry name" value="GATB"/>
    <property type="match status" value="1"/>
</dbReference>
<keyword id="KW-0067">ATP-binding</keyword>
<keyword id="KW-0436">Ligase</keyword>
<keyword id="KW-0547">Nucleotide-binding</keyword>
<keyword id="KW-0648">Protein biosynthesis</keyword>
<keyword id="KW-1185">Reference proteome</keyword>
<name>GATB_SYNJB</name>